<name>MIAB_BARQU</name>
<accession>Q6G0N1</accession>
<evidence type="ECO:0000255" key="1">
    <source>
        <dbReference type="HAMAP-Rule" id="MF_01864"/>
    </source>
</evidence>
<evidence type="ECO:0000255" key="2">
    <source>
        <dbReference type="PROSITE-ProRule" id="PRU01266"/>
    </source>
</evidence>
<protein>
    <recommendedName>
        <fullName evidence="1">tRNA-2-methylthio-N(6)-dimethylallyladenosine synthase</fullName>
        <ecNumber evidence="1">2.8.4.3</ecNumber>
    </recommendedName>
    <alternativeName>
        <fullName evidence="1">(Dimethylallyl)adenosine tRNA methylthiotransferase MiaB</fullName>
    </alternativeName>
    <alternativeName>
        <fullName evidence="1">tRNA-i(6)A37 methylthiotransferase</fullName>
    </alternativeName>
</protein>
<keyword id="KW-0004">4Fe-4S</keyword>
<keyword id="KW-0963">Cytoplasm</keyword>
<keyword id="KW-0408">Iron</keyword>
<keyword id="KW-0411">Iron-sulfur</keyword>
<keyword id="KW-0479">Metal-binding</keyword>
<keyword id="KW-0949">S-adenosyl-L-methionine</keyword>
<keyword id="KW-0808">Transferase</keyword>
<keyword id="KW-0819">tRNA processing</keyword>
<organism>
    <name type="scientific">Bartonella quintana (strain Toulouse)</name>
    <name type="common">Rochalimaea quintana</name>
    <dbReference type="NCBI Taxonomy" id="283165"/>
    <lineage>
        <taxon>Bacteria</taxon>
        <taxon>Pseudomonadati</taxon>
        <taxon>Pseudomonadota</taxon>
        <taxon>Alphaproteobacteria</taxon>
        <taxon>Hyphomicrobiales</taxon>
        <taxon>Bartonellaceae</taxon>
        <taxon>Bartonella</taxon>
    </lineage>
</organism>
<sequence length="458" mass="51366">MNKANPKNTPSVVPKKVFIKTYGCQMNVYDSQRMTDSLSSKGYVATQTPNDADLILLNTCHIREKAAEKLYSDLGRLRVMRQARTLDKPLMIGVTGCVAQAEGNEILRRAPMVDLVIGPQMYHRLPDLLEQTKQGKKIVETDYPVEDKFAHLPPHNKRAVRKRGVSAFLTVQEGCDKFCTFCVVPYTRGAEISRSVEQITEEARQLIEAGVKEITLLGQNVNGWHGQIANGKTWRLGDLLYHLAKLDGLKRLRYTTSHPRDMDDSLIAAHRDLDILMPYLHLPVQSGSDRILKAMNRQHKSIHYLHLIEKIRTARPDIAFSGDFIVGFPGETDEDFEETVKLIKQVQYSSAYSFKYSPRPGTVGATMKNHVDEAVKDARLQHLQVLLLEQQNAFLRSKIGQTTDVLIEKVGRHSGQMVGRSPWLLPVVVDTEASTGTVMSIHIKNAGSNSFVGEIANV</sequence>
<comment type="function">
    <text evidence="1">Catalyzes the methylthiolation of N6-(dimethylallyl)adenosine (i(6)A), leading to the formation of 2-methylthio-N6-(dimethylallyl)adenosine (ms(2)i(6)A) at position 37 in tRNAs that read codons beginning with uridine.</text>
</comment>
<comment type="catalytic activity">
    <reaction evidence="1">
        <text>N(6)-dimethylallyladenosine(37) in tRNA + (sulfur carrier)-SH + AH2 + 2 S-adenosyl-L-methionine = 2-methylsulfanyl-N(6)-dimethylallyladenosine(37) in tRNA + (sulfur carrier)-H + 5'-deoxyadenosine + L-methionine + A + S-adenosyl-L-homocysteine + 2 H(+)</text>
        <dbReference type="Rhea" id="RHEA:37067"/>
        <dbReference type="Rhea" id="RHEA-COMP:10375"/>
        <dbReference type="Rhea" id="RHEA-COMP:10376"/>
        <dbReference type="Rhea" id="RHEA-COMP:14737"/>
        <dbReference type="Rhea" id="RHEA-COMP:14739"/>
        <dbReference type="ChEBI" id="CHEBI:13193"/>
        <dbReference type="ChEBI" id="CHEBI:15378"/>
        <dbReference type="ChEBI" id="CHEBI:17319"/>
        <dbReference type="ChEBI" id="CHEBI:17499"/>
        <dbReference type="ChEBI" id="CHEBI:29917"/>
        <dbReference type="ChEBI" id="CHEBI:57844"/>
        <dbReference type="ChEBI" id="CHEBI:57856"/>
        <dbReference type="ChEBI" id="CHEBI:59789"/>
        <dbReference type="ChEBI" id="CHEBI:64428"/>
        <dbReference type="ChEBI" id="CHEBI:74415"/>
        <dbReference type="ChEBI" id="CHEBI:74417"/>
        <dbReference type="EC" id="2.8.4.3"/>
    </reaction>
</comment>
<comment type="cofactor">
    <cofactor evidence="1">
        <name>[4Fe-4S] cluster</name>
        <dbReference type="ChEBI" id="CHEBI:49883"/>
    </cofactor>
    <text evidence="1">Binds 2 [4Fe-4S] clusters. One cluster is coordinated with 3 cysteines and an exchangeable S-adenosyl-L-methionine.</text>
</comment>
<comment type="subunit">
    <text evidence="1">Monomer.</text>
</comment>
<comment type="subcellular location">
    <subcellularLocation>
        <location evidence="1">Cytoplasm</location>
    </subcellularLocation>
</comment>
<comment type="similarity">
    <text evidence="1">Belongs to the methylthiotransferase family. MiaB subfamily.</text>
</comment>
<feature type="chain" id="PRO_0000374146" description="tRNA-2-methylthio-N(6)-dimethylallyladenosine synthase">
    <location>
        <begin position="1"/>
        <end position="458"/>
    </location>
</feature>
<feature type="domain" description="MTTase N-terminal" evidence="1">
    <location>
        <begin position="15"/>
        <end position="134"/>
    </location>
</feature>
<feature type="domain" description="Radical SAM core" evidence="2">
    <location>
        <begin position="161"/>
        <end position="393"/>
    </location>
</feature>
<feature type="domain" description="TRAM" evidence="1">
    <location>
        <begin position="396"/>
        <end position="457"/>
    </location>
</feature>
<feature type="binding site" evidence="1">
    <location>
        <position position="24"/>
    </location>
    <ligand>
        <name>[4Fe-4S] cluster</name>
        <dbReference type="ChEBI" id="CHEBI:49883"/>
        <label>1</label>
    </ligand>
</feature>
<feature type="binding site" evidence="1">
    <location>
        <position position="60"/>
    </location>
    <ligand>
        <name>[4Fe-4S] cluster</name>
        <dbReference type="ChEBI" id="CHEBI:49883"/>
        <label>1</label>
    </ligand>
</feature>
<feature type="binding site" evidence="1">
    <location>
        <position position="97"/>
    </location>
    <ligand>
        <name>[4Fe-4S] cluster</name>
        <dbReference type="ChEBI" id="CHEBI:49883"/>
        <label>1</label>
    </ligand>
</feature>
<feature type="binding site" evidence="1">
    <location>
        <position position="175"/>
    </location>
    <ligand>
        <name>[4Fe-4S] cluster</name>
        <dbReference type="ChEBI" id="CHEBI:49883"/>
        <label>2</label>
        <note>4Fe-4S-S-AdoMet</note>
    </ligand>
</feature>
<feature type="binding site" evidence="1">
    <location>
        <position position="179"/>
    </location>
    <ligand>
        <name>[4Fe-4S] cluster</name>
        <dbReference type="ChEBI" id="CHEBI:49883"/>
        <label>2</label>
        <note>4Fe-4S-S-AdoMet</note>
    </ligand>
</feature>
<feature type="binding site" evidence="1">
    <location>
        <position position="182"/>
    </location>
    <ligand>
        <name>[4Fe-4S] cluster</name>
        <dbReference type="ChEBI" id="CHEBI:49883"/>
        <label>2</label>
        <note>4Fe-4S-S-AdoMet</note>
    </ligand>
</feature>
<dbReference type="EC" id="2.8.4.3" evidence="1"/>
<dbReference type="EMBL" id="BX897700">
    <property type="protein sequence ID" value="CAF25717.1"/>
    <property type="molecule type" value="Genomic_DNA"/>
</dbReference>
<dbReference type="RefSeq" id="WP_011179032.1">
    <property type="nucleotide sequence ID" value="NC_005955.1"/>
</dbReference>
<dbReference type="SMR" id="Q6G0N1"/>
<dbReference type="KEGG" id="bqu:BQ02140"/>
<dbReference type="eggNOG" id="COG0621">
    <property type="taxonomic scope" value="Bacteria"/>
</dbReference>
<dbReference type="HOGENOM" id="CLU_018697_2_0_5"/>
<dbReference type="OrthoDB" id="9805215at2"/>
<dbReference type="Proteomes" id="UP000000597">
    <property type="component" value="Chromosome"/>
</dbReference>
<dbReference type="GO" id="GO:0005829">
    <property type="term" value="C:cytosol"/>
    <property type="evidence" value="ECO:0007669"/>
    <property type="project" value="TreeGrafter"/>
</dbReference>
<dbReference type="GO" id="GO:0051539">
    <property type="term" value="F:4 iron, 4 sulfur cluster binding"/>
    <property type="evidence" value="ECO:0007669"/>
    <property type="project" value="UniProtKB-UniRule"/>
</dbReference>
<dbReference type="GO" id="GO:0046872">
    <property type="term" value="F:metal ion binding"/>
    <property type="evidence" value="ECO:0007669"/>
    <property type="project" value="UniProtKB-KW"/>
</dbReference>
<dbReference type="GO" id="GO:0035597">
    <property type="term" value="F:N6-isopentenyladenosine methylthiotransferase activity"/>
    <property type="evidence" value="ECO:0007669"/>
    <property type="project" value="TreeGrafter"/>
</dbReference>
<dbReference type="CDD" id="cd01335">
    <property type="entry name" value="Radical_SAM"/>
    <property type="match status" value="1"/>
</dbReference>
<dbReference type="FunFam" id="3.40.50.12160:FF:000003">
    <property type="entry name" value="CDK5 regulatory subunit-associated protein 1"/>
    <property type="match status" value="1"/>
</dbReference>
<dbReference type="FunFam" id="3.80.30.20:FF:000001">
    <property type="entry name" value="tRNA-2-methylthio-N(6)-dimethylallyladenosine synthase 2"/>
    <property type="match status" value="1"/>
</dbReference>
<dbReference type="Gene3D" id="3.40.50.12160">
    <property type="entry name" value="Methylthiotransferase, N-terminal domain"/>
    <property type="match status" value="1"/>
</dbReference>
<dbReference type="Gene3D" id="3.80.30.20">
    <property type="entry name" value="tm_1862 like domain"/>
    <property type="match status" value="1"/>
</dbReference>
<dbReference type="HAMAP" id="MF_01864">
    <property type="entry name" value="tRNA_metthiotr_MiaB"/>
    <property type="match status" value="1"/>
</dbReference>
<dbReference type="InterPro" id="IPR006638">
    <property type="entry name" value="Elp3/MiaA/NifB-like_rSAM"/>
</dbReference>
<dbReference type="InterPro" id="IPR005839">
    <property type="entry name" value="Methylthiotransferase"/>
</dbReference>
<dbReference type="InterPro" id="IPR020612">
    <property type="entry name" value="Methylthiotransferase_CS"/>
</dbReference>
<dbReference type="InterPro" id="IPR013848">
    <property type="entry name" value="Methylthiotransferase_N"/>
</dbReference>
<dbReference type="InterPro" id="IPR038135">
    <property type="entry name" value="Methylthiotransferase_N_sf"/>
</dbReference>
<dbReference type="InterPro" id="IPR006463">
    <property type="entry name" value="MiaB_methiolase"/>
</dbReference>
<dbReference type="InterPro" id="IPR007197">
    <property type="entry name" value="rSAM"/>
</dbReference>
<dbReference type="InterPro" id="IPR023404">
    <property type="entry name" value="rSAM_horseshoe"/>
</dbReference>
<dbReference type="InterPro" id="IPR002792">
    <property type="entry name" value="TRAM_dom"/>
</dbReference>
<dbReference type="NCBIfam" id="TIGR01574">
    <property type="entry name" value="miaB-methiolase"/>
    <property type="match status" value="1"/>
</dbReference>
<dbReference type="NCBIfam" id="TIGR00089">
    <property type="entry name" value="MiaB/RimO family radical SAM methylthiotransferase"/>
    <property type="match status" value="1"/>
</dbReference>
<dbReference type="PANTHER" id="PTHR43020">
    <property type="entry name" value="CDK5 REGULATORY SUBUNIT-ASSOCIATED PROTEIN 1"/>
    <property type="match status" value="1"/>
</dbReference>
<dbReference type="PANTHER" id="PTHR43020:SF2">
    <property type="entry name" value="MITOCHONDRIAL TRNA METHYLTHIOTRANSFERASE CDK5RAP1"/>
    <property type="match status" value="1"/>
</dbReference>
<dbReference type="Pfam" id="PF04055">
    <property type="entry name" value="Radical_SAM"/>
    <property type="match status" value="1"/>
</dbReference>
<dbReference type="Pfam" id="PF00919">
    <property type="entry name" value="UPF0004"/>
    <property type="match status" value="1"/>
</dbReference>
<dbReference type="SFLD" id="SFLDF00273">
    <property type="entry name" value="(dimethylallyl)adenosine_tRNA"/>
    <property type="match status" value="1"/>
</dbReference>
<dbReference type="SFLD" id="SFLDG01082">
    <property type="entry name" value="B12-binding_domain_containing"/>
    <property type="match status" value="1"/>
</dbReference>
<dbReference type="SFLD" id="SFLDG01061">
    <property type="entry name" value="methylthiotransferase"/>
    <property type="match status" value="1"/>
</dbReference>
<dbReference type="SMART" id="SM00729">
    <property type="entry name" value="Elp3"/>
    <property type="match status" value="1"/>
</dbReference>
<dbReference type="SUPFAM" id="SSF102114">
    <property type="entry name" value="Radical SAM enzymes"/>
    <property type="match status" value="1"/>
</dbReference>
<dbReference type="PROSITE" id="PS51449">
    <property type="entry name" value="MTTASE_N"/>
    <property type="match status" value="1"/>
</dbReference>
<dbReference type="PROSITE" id="PS01278">
    <property type="entry name" value="MTTASE_RADICAL"/>
    <property type="match status" value="1"/>
</dbReference>
<dbReference type="PROSITE" id="PS51918">
    <property type="entry name" value="RADICAL_SAM"/>
    <property type="match status" value="1"/>
</dbReference>
<dbReference type="PROSITE" id="PS50926">
    <property type="entry name" value="TRAM"/>
    <property type="match status" value="1"/>
</dbReference>
<proteinExistence type="inferred from homology"/>
<reference key="1">
    <citation type="journal article" date="2004" name="Proc. Natl. Acad. Sci. U.S.A.">
        <title>The louse-borne human pathogen Bartonella quintana is a genomic derivative of the zoonotic agent Bartonella henselae.</title>
        <authorList>
            <person name="Alsmark U.C.M."/>
            <person name="Frank A.C."/>
            <person name="Karlberg E.O."/>
            <person name="Legault B.-A."/>
            <person name="Ardell D.H."/>
            <person name="Canbaeck B."/>
            <person name="Eriksson A.-S."/>
            <person name="Naeslund A.K."/>
            <person name="Handley S.A."/>
            <person name="Huvet M."/>
            <person name="La Scola B."/>
            <person name="Holmberg M."/>
            <person name="Andersson S.G.E."/>
        </authorList>
    </citation>
    <scope>NUCLEOTIDE SEQUENCE [LARGE SCALE GENOMIC DNA]</scope>
    <source>
        <strain>Toulouse</strain>
    </source>
</reference>
<gene>
    <name evidence="1" type="primary">miaB</name>
    <name type="ordered locus">BQ02140</name>
</gene>